<sequence length="416" mass="44869">MEKLYVEGNKILNGHVIISGSKNAALPILFMTILTEGKIKIGNIPNLTDINIALKLLVYLGVKITGNETLCIDASSINIFCPPYNLINKIRASIWMLGPLLARFGKAKIFLPGGCKIGSRPIDLHLNGLTQLGATINLKNNCIDAYVKGRLQGKYILMEKISVGATITIMSAATLAKGSTIIDNAACEPEIVDIAKFLNTLGADIIGAGSNKICIKGVLKLTGGTHQVIPDRIETGTFLVAAAASQGHITCHKTEPKHLTNVLMKLTEAGAKIKTGKDWIKLDMRGKRPKSLNICTAPYPGFPTDMQAQFALLNSISKGIGTITETIFENRFIYTSELIRMGAKIKIKNNTIICYGIPKLISSNVFSSDLRASATLILAGCIAAGITIVNHTYHLVRGYESFPKKLNKIGANIKII</sequence>
<dbReference type="EC" id="2.5.1.7" evidence="1"/>
<dbReference type="EMBL" id="BA000003">
    <property type="protein sequence ID" value="BAB13089.1"/>
    <property type="molecule type" value="Genomic_DNA"/>
</dbReference>
<dbReference type="RefSeq" id="NP_240203.1">
    <property type="nucleotide sequence ID" value="NC_002528.1"/>
</dbReference>
<dbReference type="RefSeq" id="WP_010896094.1">
    <property type="nucleotide sequence ID" value="NC_002528.1"/>
</dbReference>
<dbReference type="SMR" id="P57466"/>
<dbReference type="STRING" id="563178.BUAP5A_379"/>
<dbReference type="EnsemblBacteria" id="BAB13089">
    <property type="protein sequence ID" value="BAB13089"/>
    <property type="gene ID" value="BAB13089"/>
</dbReference>
<dbReference type="KEGG" id="buc:BU386"/>
<dbReference type="PATRIC" id="fig|107806.10.peg.400"/>
<dbReference type="eggNOG" id="COG0766">
    <property type="taxonomic scope" value="Bacteria"/>
</dbReference>
<dbReference type="HOGENOM" id="CLU_027387_0_0_6"/>
<dbReference type="UniPathway" id="UPA00219"/>
<dbReference type="Proteomes" id="UP000001806">
    <property type="component" value="Chromosome"/>
</dbReference>
<dbReference type="GO" id="GO:0005737">
    <property type="term" value="C:cytoplasm"/>
    <property type="evidence" value="ECO:0007669"/>
    <property type="project" value="UniProtKB-SubCell"/>
</dbReference>
<dbReference type="GO" id="GO:0008760">
    <property type="term" value="F:UDP-N-acetylglucosamine 1-carboxyvinyltransferase activity"/>
    <property type="evidence" value="ECO:0007669"/>
    <property type="project" value="UniProtKB-UniRule"/>
</dbReference>
<dbReference type="GO" id="GO:0051301">
    <property type="term" value="P:cell division"/>
    <property type="evidence" value="ECO:0007669"/>
    <property type="project" value="UniProtKB-KW"/>
</dbReference>
<dbReference type="GO" id="GO:0071555">
    <property type="term" value="P:cell wall organization"/>
    <property type="evidence" value="ECO:0007669"/>
    <property type="project" value="UniProtKB-KW"/>
</dbReference>
<dbReference type="GO" id="GO:0009252">
    <property type="term" value="P:peptidoglycan biosynthetic process"/>
    <property type="evidence" value="ECO:0007669"/>
    <property type="project" value="UniProtKB-UniRule"/>
</dbReference>
<dbReference type="GO" id="GO:0008360">
    <property type="term" value="P:regulation of cell shape"/>
    <property type="evidence" value="ECO:0007669"/>
    <property type="project" value="UniProtKB-KW"/>
</dbReference>
<dbReference type="GO" id="GO:0019277">
    <property type="term" value="P:UDP-N-acetylgalactosamine biosynthetic process"/>
    <property type="evidence" value="ECO:0007669"/>
    <property type="project" value="InterPro"/>
</dbReference>
<dbReference type="CDD" id="cd01555">
    <property type="entry name" value="UdpNAET"/>
    <property type="match status" value="1"/>
</dbReference>
<dbReference type="FunFam" id="3.65.10.10:FF:000001">
    <property type="entry name" value="UDP-N-acetylglucosamine 1-carboxyvinyltransferase"/>
    <property type="match status" value="1"/>
</dbReference>
<dbReference type="Gene3D" id="3.65.10.10">
    <property type="entry name" value="Enolpyruvate transferase domain"/>
    <property type="match status" value="2"/>
</dbReference>
<dbReference type="HAMAP" id="MF_00111">
    <property type="entry name" value="MurA"/>
    <property type="match status" value="1"/>
</dbReference>
<dbReference type="InterPro" id="IPR001986">
    <property type="entry name" value="Enolpyruvate_Tfrase_dom"/>
</dbReference>
<dbReference type="InterPro" id="IPR036968">
    <property type="entry name" value="Enolpyruvate_Tfrase_sf"/>
</dbReference>
<dbReference type="InterPro" id="IPR050068">
    <property type="entry name" value="MurA_subfamily"/>
</dbReference>
<dbReference type="InterPro" id="IPR013792">
    <property type="entry name" value="RNA3'P_cycl/enolpyr_Trfase_a/b"/>
</dbReference>
<dbReference type="InterPro" id="IPR005750">
    <property type="entry name" value="UDP_GlcNAc_COvinyl_MurA"/>
</dbReference>
<dbReference type="NCBIfam" id="TIGR01072">
    <property type="entry name" value="murA"/>
    <property type="match status" value="1"/>
</dbReference>
<dbReference type="NCBIfam" id="NF006873">
    <property type="entry name" value="PRK09369.1"/>
    <property type="match status" value="1"/>
</dbReference>
<dbReference type="PANTHER" id="PTHR43783">
    <property type="entry name" value="UDP-N-ACETYLGLUCOSAMINE 1-CARBOXYVINYLTRANSFERASE"/>
    <property type="match status" value="1"/>
</dbReference>
<dbReference type="PANTHER" id="PTHR43783:SF1">
    <property type="entry name" value="UDP-N-ACETYLGLUCOSAMINE 1-CARBOXYVINYLTRANSFERASE"/>
    <property type="match status" value="1"/>
</dbReference>
<dbReference type="Pfam" id="PF00275">
    <property type="entry name" value="EPSP_synthase"/>
    <property type="match status" value="1"/>
</dbReference>
<dbReference type="SUPFAM" id="SSF55205">
    <property type="entry name" value="EPT/RTPC-like"/>
    <property type="match status" value="1"/>
</dbReference>
<reference key="1">
    <citation type="journal article" date="2000" name="Nature">
        <title>Genome sequence of the endocellular bacterial symbiont of aphids Buchnera sp. APS.</title>
        <authorList>
            <person name="Shigenobu S."/>
            <person name="Watanabe H."/>
            <person name="Hattori M."/>
            <person name="Sakaki Y."/>
            <person name="Ishikawa H."/>
        </authorList>
    </citation>
    <scope>NUCLEOTIDE SEQUENCE [LARGE SCALE GENOMIC DNA]</scope>
    <source>
        <strain>APS</strain>
    </source>
</reference>
<comment type="function">
    <text evidence="1">Cell wall formation. Adds enolpyruvyl to UDP-N-acetylglucosamine.</text>
</comment>
<comment type="catalytic activity">
    <reaction evidence="1">
        <text>phosphoenolpyruvate + UDP-N-acetyl-alpha-D-glucosamine = UDP-N-acetyl-3-O-(1-carboxyvinyl)-alpha-D-glucosamine + phosphate</text>
        <dbReference type="Rhea" id="RHEA:18681"/>
        <dbReference type="ChEBI" id="CHEBI:43474"/>
        <dbReference type="ChEBI" id="CHEBI:57705"/>
        <dbReference type="ChEBI" id="CHEBI:58702"/>
        <dbReference type="ChEBI" id="CHEBI:68483"/>
        <dbReference type="EC" id="2.5.1.7"/>
    </reaction>
</comment>
<comment type="pathway">
    <text evidence="1">Cell wall biogenesis; peptidoglycan biosynthesis.</text>
</comment>
<comment type="subcellular location">
    <subcellularLocation>
        <location evidence="1">Cytoplasm</location>
    </subcellularLocation>
</comment>
<comment type="similarity">
    <text evidence="1">Belongs to the EPSP synthase family. MurA subfamily.</text>
</comment>
<evidence type="ECO:0000255" key="1">
    <source>
        <dbReference type="HAMAP-Rule" id="MF_00111"/>
    </source>
</evidence>
<proteinExistence type="inferred from homology"/>
<keyword id="KW-0131">Cell cycle</keyword>
<keyword id="KW-0132">Cell division</keyword>
<keyword id="KW-0133">Cell shape</keyword>
<keyword id="KW-0961">Cell wall biogenesis/degradation</keyword>
<keyword id="KW-0963">Cytoplasm</keyword>
<keyword id="KW-0573">Peptidoglycan synthesis</keyword>
<keyword id="KW-0670">Pyruvate</keyword>
<keyword id="KW-1185">Reference proteome</keyword>
<keyword id="KW-0808">Transferase</keyword>
<accession>P57466</accession>
<organism>
    <name type="scientific">Buchnera aphidicola subsp. Acyrthosiphon pisum (strain APS)</name>
    <name type="common">Acyrthosiphon pisum symbiotic bacterium</name>
    <dbReference type="NCBI Taxonomy" id="107806"/>
    <lineage>
        <taxon>Bacteria</taxon>
        <taxon>Pseudomonadati</taxon>
        <taxon>Pseudomonadota</taxon>
        <taxon>Gammaproteobacteria</taxon>
        <taxon>Enterobacterales</taxon>
        <taxon>Erwiniaceae</taxon>
        <taxon>Buchnera</taxon>
    </lineage>
</organism>
<gene>
    <name evidence="1" type="primary">murA</name>
    <name type="ordered locus">BU386</name>
</gene>
<name>MURA_BUCAI</name>
<feature type="chain" id="PRO_0000178853" description="UDP-N-acetylglucosamine 1-carboxyvinyltransferase">
    <location>
        <begin position="1"/>
        <end position="416"/>
    </location>
</feature>
<feature type="active site" description="Proton donor" evidence="1">
    <location>
        <position position="115"/>
    </location>
</feature>
<feature type="binding site" evidence="1">
    <location>
        <begin position="22"/>
        <end position="23"/>
    </location>
    <ligand>
        <name>phosphoenolpyruvate</name>
        <dbReference type="ChEBI" id="CHEBI:58702"/>
    </ligand>
</feature>
<feature type="binding site" evidence="1">
    <location>
        <position position="91"/>
    </location>
    <ligand>
        <name>UDP-N-acetyl-alpha-D-glucosamine</name>
        <dbReference type="ChEBI" id="CHEBI:57705"/>
    </ligand>
</feature>
<feature type="binding site" evidence="1">
    <location>
        <begin position="120"/>
        <end position="124"/>
    </location>
    <ligand>
        <name>UDP-N-acetyl-alpha-D-glucosamine</name>
        <dbReference type="ChEBI" id="CHEBI:57705"/>
    </ligand>
</feature>
<feature type="binding site" evidence="1">
    <location>
        <position position="305"/>
    </location>
    <ligand>
        <name>UDP-N-acetyl-alpha-D-glucosamine</name>
        <dbReference type="ChEBI" id="CHEBI:57705"/>
    </ligand>
</feature>
<feature type="binding site" evidence="1">
    <location>
        <position position="327"/>
    </location>
    <ligand>
        <name>UDP-N-acetyl-alpha-D-glucosamine</name>
        <dbReference type="ChEBI" id="CHEBI:57705"/>
    </ligand>
</feature>
<feature type="modified residue" description="2-(S-cysteinyl)pyruvic acid O-phosphothioketal" evidence="1">
    <location>
        <position position="115"/>
    </location>
</feature>
<protein>
    <recommendedName>
        <fullName evidence="1">UDP-N-acetylglucosamine 1-carboxyvinyltransferase</fullName>
        <ecNumber evidence="1">2.5.1.7</ecNumber>
    </recommendedName>
    <alternativeName>
        <fullName evidence="1">Enoylpyruvate transferase</fullName>
    </alternativeName>
    <alternativeName>
        <fullName evidence="1">UDP-N-acetylglucosamine enolpyruvyl transferase</fullName>
        <shortName evidence="1">EPT</shortName>
    </alternativeName>
</protein>